<organism>
    <name type="scientific">Azorhizobium caulinodans (strain ATCC 43989 / DSM 5975 / JCM 20966 / LMG 6465 / NBRC 14845 / NCIMB 13405 / ORS 571)</name>
    <dbReference type="NCBI Taxonomy" id="438753"/>
    <lineage>
        <taxon>Bacteria</taxon>
        <taxon>Pseudomonadati</taxon>
        <taxon>Pseudomonadota</taxon>
        <taxon>Alphaproteobacteria</taxon>
        <taxon>Hyphomicrobiales</taxon>
        <taxon>Xanthobacteraceae</taxon>
        <taxon>Azorhizobium</taxon>
    </lineage>
</organism>
<comment type="function">
    <text evidence="1">Aspartyl-tRNA synthetase with relaxed tRNA specificity since it is able to aspartylate not only its cognate tRNA(Asp) but also tRNA(Asn). Reaction proceeds in two steps: L-aspartate is first activated by ATP to form Asp-AMP and then transferred to the acceptor end of tRNA(Asp/Asn).</text>
</comment>
<comment type="catalytic activity">
    <reaction evidence="1">
        <text>tRNA(Asx) + L-aspartate + ATP = L-aspartyl-tRNA(Asx) + AMP + diphosphate</text>
        <dbReference type="Rhea" id="RHEA:18349"/>
        <dbReference type="Rhea" id="RHEA-COMP:9710"/>
        <dbReference type="Rhea" id="RHEA-COMP:9711"/>
        <dbReference type="ChEBI" id="CHEBI:29991"/>
        <dbReference type="ChEBI" id="CHEBI:30616"/>
        <dbReference type="ChEBI" id="CHEBI:33019"/>
        <dbReference type="ChEBI" id="CHEBI:78442"/>
        <dbReference type="ChEBI" id="CHEBI:78516"/>
        <dbReference type="ChEBI" id="CHEBI:456215"/>
        <dbReference type="EC" id="6.1.1.23"/>
    </reaction>
</comment>
<comment type="subunit">
    <text evidence="1">Homodimer.</text>
</comment>
<comment type="subcellular location">
    <subcellularLocation>
        <location evidence="1">Cytoplasm</location>
    </subcellularLocation>
</comment>
<comment type="similarity">
    <text evidence="1">Belongs to the class-II aminoacyl-tRNA synthetase family. Type 1 subfamily.</text>
</comment>
<protein>
    <recommendedName>
        <fullName evidence="1">Aspartate--tRNA(Asp/Asn) ligase</fullName>
        <ecNumber evidence="1">6.1.1.23</ecNumber>
    </recommendedName>
    <alternativeName>
        <fullName evidence="1">Aspartyl-tRNA synthetase</fullName>
        <shortName evidence="1">AspRS</shortName>
    </alternativeName>
    <alternativeName>
        <fullName evidence="1">Non-discriminating aspartyl-tRNA synthetase</fullName>
        <shortName evidence="1">ND-AspRS</shortName>
    </alternativeName>
</protein>
<proteinExistence type="inferred from homology"/>
<sequence length="590" mass="66324">MHRYRTHTCGALTEAQVGDTVRVSGWCHRIRDHGGVLFVDLRDHYGLTQVVFDPDSAAFAAAEKVRAEWVIRVDGRVRLRPEGTENSELATGKVEIYATDLEVLGPAAELPLPVFGDQDYPEDIRLRYRFLDLRRERIHGNIMKRGQIIDSLRQRMKGQGFFEFQTPILTASSPEGARDFLVPSRIHPGKFYALPQAPQQYKQLIMMSGFDRYFQIAPCFRDEDPRADRLPGEFYQLDLEMSFVTQDDVFAAVEPVIRGVFEEFGGGKPVTQNWPRIPYAEALRKYGSDKPDLRNPLVMQNVSEHFRGSNFKVFARLLEDPKNEVWAIPGPTGGSRAFCDRMNSWAQGEGQPGLGYIMWREGGEGAGPLANNIGPERTAAIREQLGLKDGDAAFFVAGNPEKFYKFAGLARTKVGEELKLIDTERFELAWIVDFPFYEWSDEEKKIDFSHNPFSMPQGGLEALNGQDPLTIKAFQYDIACNGYEIASGGIRNHRPEAMVKAFELAGYDEATVIERFGGMYRAFQYGAPPHGGMAAGIDRIVMLLCGVSNLREISLFPMNQQALDLLMGAPNEATPKQMKELHIRPALPAK</sequence>
<keyword id="KW-0030">Aminoacyl-tRNA synthetase</keyword>
<keyword id="KW-0067">ATP-binding</keyword>
<keyword id="KW-0963">Cytoplasm</keyword>
<keyword id="KW-0436">Ligase</keyword>
<keyword id="KW-0547">Nucleotide-binding</keyword>
<keyword id="KW-0648">Protein biosynthesis</keyword>
<keyword id="KW-1185">Reference proteome</keyword>
<gene>
    <name evidence="1" type="primary">aspS</name>
    <name type="ordered locus">AZC_3659</name>
</gene>
<accession>A8IFX1</accession>
<dbReference type="EC" id="6.1.1.23" evidence="1"/>
<dbReference type="EMBL" id="AP009384">
    <property type="protein sequence ID" value="BAF89657.1"/>
    <property type="molecule type" value="Genomic_DNA"/>
</dbReference>
<dbReference type="RefSeq" id="WP_012172182.1">
    <property type="nucleotide sequence ID" value="NC_009937.1"/>
</dbReference>
<dbReference type="SMR" id="A8IFX1"/>
<dbReference type="STRING" id="438753.AZC_3659"/>
<dbReference type="KEGG" id="azc:AZC_3659"/>
<dbReference type="eggNOG" id="COG0173">
    <property type="taxonomic scope" value="Bacteria"/>
</dbReference>
<dbReference type="HOGENOM" id="CLU_014330_3_2_5"/>
<dbReference type="Proteomes" id="UP000000270">
    <property type="component" value="Chromosome"/>
</dbReference>
<dbReference type="GO" id="GO:0005737">
    <property type="term" value="C:cytoplasm"/>
    <property type="evidence" value="ECO:0007669"/>
    <property type="project" value="UniProtKB-SubCell"/>
</dbReference>
<dbReference type="GO" id="GO:0004815">
    <property type="term" value="F:aspartate-tRNA ligase activity"/>
    <property type="evidence" value="ECO:0007669"/>
    <property type="project" value="UniProtKB-UniRule"/>
</dbReference>
<dbReference type="GO" id="GO:0050560">
    <property type="term" value="F:aspartate-tRNA(Asn) ligase activity"/>
    <property type="evidence" value="ECO:0007669"/>
    <property type="project" value="UniProtKB-EC"/>
</dbReference>
<dbReference type="GO" id="GO:0005524">
    <property type="term" value="F:ATP binding"/>
    <property type="evidence" value="ECO:0007669"/>
    <property type="project" value="UniProtKB-UniRule"/>
</dbReference>
<dbReference type="GO" id="GO:0003676">
    <property type="term" value="F:nucleic acid binding"/>
    <property type="evidence" value="ECO:0007669"/>
    <property type="project" value="InterPro"/>
</dbReference>
<dbReference type="GO" id="GO:0006422">
    <property type="term" value="P:aspartyl-tRNA aminoacylation"/>
    <property type="evidence" value="ECO:0007669"/>
    <property type="project" value="UniProtKB-UniRule"/>
</dbReference>
<dbReference type="CDD" id="cd00777">
    <property type="entry name" value="AspRS_core"/>
    <property type="match status" value="1"/>
</dbReference>
<dbReference type="CDD" id="cd04317">
    <property type="entry name" value="EcAspRS_like_N"/>
    <property type="match status" value="1"/>
</dbReference>
<dbReference type="Gene3D" id="3.30.930.10">
    <property type="entry name" value="Bira Bifunctional Protein, Domain 2"/>
    <property type="match status" value="1"/>
</dbReference>
<dbReference type="Gene3D" id="3.30.1360.30">
    <property type="entry name" value="GAD-like domain"/>
    <property type="match status" value="1"/>
</dbReference>
<dbReference type="Gene3D" id="2.40.50.140">
    <property type="entry name" value="Nucleic acid-binding proteins"/>
    <property type="match status" value="1"/>
</dbReference>
<dbReference type="HAMAP" id="MF_00044">
    <property type="entry name" value="Asp_tRNA_synth_type1"/>
    <property type="match status" value="1"/>
</dbReference>
<dbReference type="InterPro" id="IPR004364">
    <property type="entry name" value="Aa-tRNA-synt_II"/>
</dbReference>
<dbReference type="InterPro" id="IPR006195">
    <property type="entry name" value="aa-tRNA-synth_II"/>
</dbReference>
<dbReference type="InterPro" id="IPR045864">
    <property type="entry name" value="aa-tRNA-synth_II/BPL/LPL"/>
</dbReference>
<dbReference type="InterPro" id="IPR004524">
    <property type="entry name" value="Asp-tRNA-ligase_1"/>
</dbReference>
<dbReference type="InterPro" id="IPR047089">
    <property type="entry name" value="Asp-tRNA-ligase_1_N"/>
</dbReference>
<dbReference type="InterPro" id="IPR002312">
    <property type="entry name" value="Asp/Asn-tRNA-synth_IIb"/>
</dbReference>
<dbReference type="InterPro" id="IPR047090">
    <property type="entry name" value="AspRS_core"/>
</dbReference>
<dbReference type="InterPro" id="IPR004115">
    <property type="entry name" value="GAD-like_sf"/>
</dbReference>
<dbReference type="InterPro" id="IPR029351">
    <property type="entry name" value="GAD_dom"/>
</dbReference>
<dbReference type="InterPro" id="IPR012340">
    <property type="entry name" value="NA-bd_OB-fold"/>
</dbReference>
<dbReference type="InterPro" id="IPR004365">
    <property type="entry name" value="NA-bd_OB_tRNA"/>
</dbReference>
<dbReference type="NCBIfam" id="TIGR00459">
    <property type="entry name" value="aspS_bact"/>
    <property type="match status" value="1"/>
</dbReference>
<dbReference type="NCBIfam" id="NF001750">
    <property type="entry name" value="PRK00476.1"/>
    <property type="match status" value="1"/>
</dbReference>
<dbReference type="PANTHER" id="PTHR22594:SF5">
    <property type="entry name" value="ASPARTATE--TRNA LIGASE, MITOCHONDRIAL"/>
    <property type="match status" value="1"/>
</dbReference>
<dbReference type="PANTHER" id="PTHR22594">
    <property type="entry name" value="ASPARTYL/LYSYL-TRNA SYNTHETASE"/>
    <property type="match status" value="1"/>
</dbReference>
<dbReference type="Pfam" id="PF02938">
    <property type="entry name" value="GAD"/>
    <property type="match status" value="1"/>
</dbReference>
<dbReference type="Pfam" id="PF00152">
    <property type="entry name" value="tRNA-synt_2"/>
    <property type="match status" value="1"/>
</dbReference>
<dbReference type="Pfam" id="PF01336">
    <property type="entry name" value="tRNA_anti-codon"/>
    <property type="match status" value="1"/>
</dbReference>
<dbReference type="PRINTS" id="PR01042">
    <property type="entry name" value="TRNASYNTHASP"/>
</dbReference>
<dbReference type="SUPFAM" id="SSF55681">
    <property type="entry name" value="Class II aaRS and biotin synthetases"/>
    <property type="match status" value="1"/>
</dbReference>
<dbReference type="SUPFAM" id="SSF55261">
    <property type="entry name" value="GAD domain-like"/>
    <property type="match status" value="1"/>
</dbReference>
<dbReference type="SUPFAM" id="SSF50249">
    <property type="entry name" value="Nucleic acid-binding proteins"/>
    <property type="match status" value="1"/>
</dbReference>
<dbReference type="PROSITE" id="PS50862">
    <property type="entry name" value="AA_TRNA_LIGASE_II"/>
    <property type="match status" value="1"/>
</dbReference>
<reference key="1">
    <citation type="submission" date="2007-04" db="EMBL/GenBank/DDBJ databases">
        <title>Complete genome sequence of the nitrogen-fixing bacterium Azorhizobium caulinodans ORS571.</title>
        <authorList>
            <person name="Lee K.B."/>
            <person name="Backer P.D."/>
            <person name="Aono T."/>
            <person name="Liu C.T."/>
            <person name="Suzuki S."/>
            <person name="Suzuki T."/>
            <person name="Kaneko T."/>
            <person name="Yamada M."/>
            <person name="Tabata S."/>
            <person name="Kupfer D.M."/>
            <person name="Najar F.Z."/>
            <person name="Wiley G.B."/>
            <person name="Roe B."/>
            <person name="Binnewies T."/>
            <person name="Ussery D."/>
            <person name="Vereecke D."/>
            <person name="Gevers D."/>
            <person name="Holsters M."/>
            <person name="Oyaizu H."/>
        </authorList>
    </citation>
    <scope>NUCLEOTIDE SEQUENCE [LARGE SCALE GENOMIC DNA]</scope>
    <source>
        <strain>ATCC 43989 / DSM 5975 / JCM 20966 / LMG 6465 / NBRC 14845 / NCIMB 13405 / ORS 571</strain>
    </source>
</reference>
<evidence type="ECO:0000255" key="1">
    <source>
        <dbReference type="HAMAP-Rule" id="MF_00044"/>
    </source>
</evidence>
<feature type="chain" id="PRO_1000071083" description="Aspartate--tRNA(Asp/Asn) ligase">
    <location>
        <begin position="1"/>
        <end position="590"/>
    </location>
</feature>
<feature type="region of interest" description="Aspartate" evidence="1">
    <location>
        <begin position="199"/>
        <end position="202"/>
    </location>
</feature>
<feature type="binding site" evidence="1">
    <location>
        <position position="175"/>
    </location>
    <ligand>
        <name>L-aspartate</name>
        <dbReference type="ChEBI" id="CHEBI:29991"/>
    </ligand>
</feature>
<feature type="binding site" evidence="1">
    <location>
        <begin position="221"/>
        <end position="223"/>
    </location>
    <ligand>
        <name>ATP</name>
        <dbReference type="ChEBI" id="CHEBI:30616"/>
    </ligand>
</feature>
<feature type="binding site" evidence="1">
    <location>
        <position position="221"/>
    </location>
    <ligand>
        <name>L-aspartate</name>
        <dbReference type="ChEBI" id="CHEBI:29991"/>
    </ligand>
</feature>
<feature type="binding site" evidence="1">
    <location>
        <position position="450"/>
    </location>
    <ligand>
        <name>L-aspartate</name>
        <dbReference type="ChEBI" id="CHEBI:29991"/>
    </ligand>
</feature>
<feature type="binding site" evidence="1">
    <location>
        <position position="484"/>
    </location>
    <ligand>
        <name>ATP</name>
        <dbReference type="ChEBI" id="CHEBI:30616"/>
    </ligand>
</feature>
<feature type="binding site" evidence="1">
    <location>
        <position position="491"/>
    </location>
    <ligand>
        <name>L-aspartate</name>
        <dbReference type="ChEBI" id="CHEBI:29991"/>
    </ligand>
</feature>
<feature type="binding site" evidence="1">
    <location>
        <begin position="536"/>
        <end position="539"/>
    </location>
    <ligand>
        <name>ATP</name>
        <dbReference type="ChEBI" id="CHEBI:30616"/>
    </ligand>
</feature>
<feature type="site" description="Important for tRNA non-discrimination" evidence="1">
    <location>
        <position position="33"/>
    </location>
</feature>
<feature type="site" description="Important for tRNA non-discrimination" evidence="1">
    <location>
        <position position="83"/>
    </location>
</feature>
<name>SYDND_AZOC5</name>